<protein>
    <recommendedName>
        <fullName>Clavanin-D</fullName>
    </recommendedName>
</protein>
<name>CLAVD_STYCL</name>
<organism>
    <name type="scientific">Styela clava</name>
    <name type="common">Sea squirt</name>
    <dbReference type="NCBI Taxonomy" id="7725"/>
    <lineage>
        <taxon>Eukaryota</taxon>
        <taxon>Metazoa</taxon>
        <taxon>Chordata</taxon>
        <taxon>Tunicata</taxon>
        <taxon>Ascidiacea</taxon>
        <taxon>Stolidobranchia</taxon>
        <taxon>Styelidae</taxon>
        <taxon>Styela</taxon>
    </lineage>
</organism>
<evidence type="ECO:0000255" key="1"/>
<evidence type="ECO:0000269" key="2">
    <source>
    </source>
</evidence>
<feature type="signal peptide" evidence="1">
    <location>
        <begin position="1"/>
        <end position="19"/>
    </location>
</feature>
<feature type="propeptide" id="PRO_0000020942" evidence="2">
    <location>
        <begin position="20"/>
        <end position="29"/>
    </location>
</feature>
<feature type="peptide" id="PRO_0000020943" description="Clavanin-D">
    <location>
        <begin position="30"/>
        <end position="52"/>
    </location>
</feature>
<feature type="propeptide" id="PRO_0000020944">
    <location>
        <begin position="54"/>
        <end position="80"/>
    </location>
</feature>
<feature type="modified residue" description="Phenylalanine amide" evidence="2">
    <location>
        <position position="52"/>
    </location>
</feature>
<sequence>MKTTILILLILGLGINAKSLEERKSEEEKAFKLLGRIIHHVGNFVYGFSHVFGDDQQDNGKFYGHYAEDNGKHWYDTGDQ</sequence>
<comment type="function">
    <text>Has antimicrobial activity against E.coli, L.monocytogenes and C.albicans.</text>
</comment>
<comment type="subcellular location">
    <subcellularLocation>
        <location>Secreted</location>
    </subcellularLocation>
</comment>
<comment type="tissue specificity">
    <text>Hemocytes and pharyngeal tissues.</text>
</comment>
<dbReference type="EMBL" id="Y11019">
    <property type="protein sequence ID" value="CAA71901.1"/>
    <property type="molecule type" value="mRNA"/>
</dbReference>
<dbReference type="EMBL" id="Y10407">
    <property type="protein sequence ID" value="CAA71426.1"/>
    <property type="molecule type" value="mRNA"/>
</dbReference>
<dbReference type="RefSeq" id="XP_039274252.1">
    <property type="nucleotide sequence ID" value="XM_039418318.1"/>
</dbReference>
<dbReference type="SMR" id="P80713"/>
<dbReference type="TCDB" id="1.C.17.3.1">
    <property type="family name" value="the cecropin (cecropin) family"/>
</dbReference>
<dbReference type="GeneID" id="120348190"/>
<dbReference type="GO" id="GO:0005576">
    <property type="term" value="C:extracellular region"/>
    <property type="evidence" value="ECO:0007669"/>
    <property type="project" value="UniProtKB-SubCell"/>
</dbReference>
<dbReference type="GO" id="GO:0042742">
    <property type="term" value="P:defense response to bacterium"/>
    <property type="evidence" value="ECO:0007669"/>
    <property type="project" value="UniProtKB-KW"/>
</dbReference>
<dbReference type="InterPro" id="IPR008453">
    <property type="entry name" value="Clavanin"/>
</dbReference>
<dbReference type="Pfam" id="PF05452">
    <property type="entry name" value="Clavanin"/>
    <property type="match status" value="1"/>
</dbReference>
<accession>P80713</accession>
<accession>O18491</accession>
<keyword id="KW-0027">Amidation</keyword>
<keyword id="KW-0044">Antibiotic</keyword>
<keyword id="KW-0929">Antimicrobial</keyword>
<keyword id="KW-0903">Direct protein sequencing</keyword>
<keyword id="KW-0964">Secreted</keyword>
<keyword id="KW-0732">Signal</keyword>
<reference key="1">
    <citation type="journal article" date="1997" name="FEBS Lett.">
        <title>cDNA cloning of Clavanins: antimicrobial peptides of tunicate hemocytes.</title>
        <authorList>
            <person name="Zhao C."/>
            <person name="Lian H."/>
            <person name="Lee I.H."/>
            <person name="Lehrer R.I."/>
        </authorList>
    </citation>
    <scope>NUCLEOTIDE SEQUENCE [MRNA]</scope>
    <source>
        <tissue>Hemocyte</tissue>
        <tissue>Pharynx</tissue>
    </source>
</reference>
<reference key="2">
    <citation type="journal article" date="1997" name="FEBS Lett.">
        <title>Clavanins, alpha-helical antimicrobial peptides from tunicate hemocytes.</title>
        <authorList>
            <person name="Lee I.H."/>
            <person name="Zhao C."/>
            <person name="Cho Y."/>
            <person name="Harwig S.S.L."/>
            <person name="Cooper E.L."/>
            <person name="Lehrer R.I."/>
        </authorList>
    </citation>
    <scope>PROTEIN SEQUENCE OF 30-52</scope>
    <scope>AMIDATION AT PHE-52</scope>
    <source>
        <tissue>Hemocyte</tissue>
    </source>
</reference>
<proteinExistence type="evidence at protein level"/>